<sequence length="160" mass="18329">MANKKEEPGHSPLVNKKAKFNFELVSFIEAGIVLSGSEVKSLREKKGNLTDAFAKIKNGEVFLENFSITPYKNGGYVNHPEIRPRKLLLHKKEIEKLERQVKEKGLVLVATKVYFKNNLRVKVEIAVGKPKKIHDKRDDMQKKDAQQEIARALKSSNRYE</sequence>
<gene>
    <name evidence="1" type="primary">smpB</name>
    <name type="ordered locus">LBJ_1033</name>
</gene>
<proteinExistence type="inferred from homology"/>
<evidence type="ECO:0000255" key="1">
    <source>
        <dbReference type="HAMAP-Rule" id="MF_00023"/>
    </source>
</evidence>
<evidence type="ECO:0000256" key="2">
    <source>
        <dbReference type="SAM" id="MobiDB-lite"/>
    </source>
</evidence>
<organism>
    <name type="scientific">Leptospira borgpetersenii serovar Hardjo-bovis (strain JB197)</name>
    <dbReference type="NCBI Taxonomy" id="355277"/>
    <lineage>
        <taxon>Bacteria</taxon>
        <taxon>Pseudomonadati</taxon>
        <taxon>Spirochaetota</taxon>
        <taxon>Spirochaetia</taxon>
        <taxon>Leptospirales</taxon>
        <taxon>Leptospiraceae</taxon>
        <taxon>Leptospira</taxon>
    </lineage>
</organism>
<reference key="1">
    <citation type="journal article" date="2006" name="Proc. Natl. Acad. Sci. U.S.A.">
        <title>Genome reduction in Leptospira borgpetersenii reflects limited transmission potential.</title>
        <authorList>
            <person name="Bulach D.M."/>
            <person name="Zuerner R.L."/>
            <person name="Wilson P."/>
            <person name="Seemann T."/>
            <person name="McGrath A."/>
            <person name="Cullen P.A."/>
            <person name="Davis J."/>
            <person name="Johnson M."/>
            <person name="Kuczek E."/>
            <person name="Alt D.P."/>
            <person name="Peterson-Burch B."/>
            <person name="Coppel R.L."/>
            <person name="Rood J.I."/>
            <person name="Davies J.K."/>
            <person name="Adler B."/>
        </authorList>
    </citation>
    <scope>NUCLEOTIDE SEQUENCE [LARGE SCALE GENOMIC DNA]</scope>
    <source>
        <strain>JB197</strain>
    </source>
</reference>
<keyword id="KW-0963">Cytoplasm</keyword>
<keyword id="KW-0694">RNA-binding</keyword>
<name>SSRP_LEPBJ</name>
<feature type="chain" id="PRO_1000002077" description="SsrA-binding protein">
    <location>
        <begin position="1"/>
        <end position="160"/>
    </location>
</feature>
<feature type="region of interest" description="Disordered" evidence="2">
    <location>
        <begin position="132"/>
        <end position="160"/>
    </location>
</feature>
<feature type="compositionally biased region" description="Basic and acidic residues" evidence="2">
    <location>
        <begin position="135"/>
        <end position="146"/>
    </location>
</feature>
<dbReference type="EMBL" id="CP000350">
    <property type="protein sequence ID" value="ABJ75665.1"/>
    <property type="molecule type" value="Genomic_DNA"/>
</dbReference>
<dbReference type="RefSeq" id="WP_011670499.1">
    <property type="nucleotide sequence ID" value="NC_008510.1"/>
</dbReference>
<dbReference type="SMR" id="Q04TV5"/>
<dbReference type="KEGG" id="lbj:LBJ_1033"/>
<dbReference type="HOGENOM" id="CLU_108953_0_1_12"/>
<dbReference type="Proteomes" id="UP000000656">
    <property type="component" value="Chromosome 1"/>
</dbReference>
<dbReference type="GO" id="GO:0005829">
    <property type="term" value="C:cytosol"/>
    <property type="evidence" value="ECO:0007669"/>
    <property type="project" value="TreeGrafter"/>
</dbReference>
<dbReference type="GO" id="GO:0003723">
    <property type="term" value="F:RNA binding"/>
    <property type="evidence" value="ECO:0007669"/>
    <property type="project" value="UniProtKB-UniRule"/>
</dbReference>
<dbReference type="GO" id="GO:0070929">
    <property type="term" value="P:trans-translation"/>
    <property type="evidence" value="ECO:0007669"/>
    <property type="project" value="UniProtKB-UniRule"/>
</dbReference>
<dbReference type="CDD" id="cd09294">
    <property type="entry name" value="SmpB"/>
    <property type="match status" value="1"/>
</dbReference>
<dbReference type="Gene3D" id="2.40.280.10">
    <property type="match status" value="1"/>
</dbReference>
<dbReference type="HAMAP" id="MF_00023">
    <property type="entry name" value="SmpB"/>
    <property type="match status" value="1"/>
</dbReference>
<dbReference type="InterPro" id="IPR023620">
    <property type="entry name" value="SmpB"/>
</dbReference>
<dbReference type="InterPro" id="IPR000037">
    <property type="entry name" value="SsrA-bd_prot"/>
</dbReference>
<dbReference type="InterPro" id="IPR020081">
    <property type="entry name" value="SsrA-bd_prot_CS"/>
</dbReference>
<dbReference type="NCBIfam" id="NF003843">
    <property type="entry name" value="PRK05422.1"/>
    <property type="match status" value="1"/>
</dbReference>
<dbReference type="NCBIfam" id="TIGR00086">
    <property type="entry name" value="smpB"/>
    <property type="match status" value="1"/>
</dbReference>
<dbReference type="PANTHER" id="PTHR30308:SF2">
    <property type="entry name" value="SSRA-BINDING PROTEIN"/>
    <property type="match status" value="1"/>
</dbReference>
<dbReference type="PANTHER" id="PTHR30308">
    <property type="entry name" value="TMRNA-BINDING COMPONENT OF TRANS-TRANSLATION TAGGING COMPLEX"/>
    <property type="match status" value="1"/>
</dbReference>
<dbReference type="Pfam" id="PF01668">
    <property type="entry name" value="SmpB"/>
    <property type="match status" value="1"/>
</dbReference>
<dbReference type="SUPFAM" id="SSF74982">
    <property type="entry name" value="Small protein B (SmpB)"/>
    <property type="match status" value="1"/>
</dbReference>
<dbReference type="PROSITE" id="PS01317">
    <property type="entry name" value="SSRP"/>
    <property type="match status" value="1"/>
</dbReference>
<accession>Q04TV5</accession>
<protein>
    <recommendedName>
        <fullName evidence="1">SsrA-binding protein</fullName>
    </recommendedName>
    <alternativeName>
        <fullName evidence="1">Small protein B</fullName>
    </alternativeName>
</protein>
<comment type="function">
    <text evidence="1">Required for rescue of stalled ribosomes mediated by trans-translation. Binds to transfer-messenger RNA (tmRNA), required for stable association of tmRNA with ribosomes. tmRNA and SmpB together mimic tRNA shape, replacing the anticodon stem-loop with SmpB. tmRNA is encoded by the ssrA gene; the 2 termini fold to resemble tRNA(Ala) and it encodes a 'tag peptide', a short internal open reading frame. During trans-translation Ala-aminoacylated tmRNA acts like a tRNA, entering the A-site of stalled ribosomes, displacing the stalled mRNA. The ribosome then switches to translate the ORF on the tmRNA; the nascent peptide is terminated with the 'tag peptide' encoded by the tmRNA and targeted for degradation. The ribosome is freed to recommence translation, which seems to be the essential function of trans-translation.</text>
</comment>
<comment type="subcellular location">
    <subcellularLocation>
        <location evidence="1">Cytoplasm</location>
    </subcellularLocation>
    <text evidence="1">The tmRNA-SmpB complex associates with stalled 70S ribosomes.</text>
</comment>
<comment type="similarity">
    <text evidence="1">Belongs to the SmpB family.</text>
</comment>